<dbReference type="EC" id="1.14.11.-" evidence="1"/>
<dbReference type="EMBL" id="CP000552">
    <property type="protein sequence ID" value="ABM72539.1"/>
    <property type="status" value="ALT_INIT"/>
    <property type="molecule type" value="Genomic_DNA"/>
</dbReference>
<dbReference type="RefSeq" id="WP_041710633.1">
    <property type="nucleotide sequence ID" value="NC_008817.1"/>
</dbReference>
<dbReference type="SMR" id="A2BXM8"/>
<dbReference type="STRING" id="167542.P9515_13321"/>
<dbReference type="GeneID" id="60200796"/>
<dbReference type="KEGG" id="pmc:P9515_13321"/>
<dbReference type="eggNOG" id="COG3128">
    <property type="taxonomic scope" value="Bacteria"/>
</dbReference>
<dbReference type="HOGENOM" id="CLU_106663_0_0_3"/>
<dbReference type="OrthoDB" id="9812472at2"/>
<dbReference type="Proteomes" id="UP000001589">
    <property type="component" value="Chromosome"/>
</dbReference>
<dbReference type="GO" id="GO:0016706">
    <property type="term" value="F:2-oxoglutarate-dependent dioxygenase activity"/>
    <property type="evidence" value="ECO:0007669"/>
    <property type="project" value="UniProtKB-UniRule"/>
</dbReference>
<dbReference type="GO" id="GO:0005506">
    <property type="term" value="F:iron ion binding"/>
    <property type="evidence" value="ECO:0007669"/>
    <property type="project" value="UniProtKB-UniRule"/>
</dbReference>
<dbReference type="GO" id="GO:0031418">
    <property type="term" value="F:L-ascorbic acid binding"/>
    <property type="evidence" value="ECO:0007669"/>
    <property type="project" value="UniProtKB-KW"/>
</dbReference>
<dbReference type="GO" id="GO:0006974">
    <property type="term" value="P:DNA damage response"/>
    <property type="evidence" value="ECO:0007669"/>
    <property type="project" value="TreeGrafter"/>
</dbReference>
<dbReference type="GO" id="GO:0006879">
    <property type="term" value="P:intracellular iron ion homeostasis"/>
    <property type="evidence" value="ECO:0007669"/>
    <property type="project" value="TreeGrafter"/>
</dbReference>
<dbReference type="Gene3D" id="2.60.120.620">
    <property type="entry name" value="q2cbj1_9rhob like domain"/>
    <property type="match status" value="1"/>
</dbReference>
<dbReference type="Gene3D" id="4.10.860.20">
    <property type="entry name" value="Rabenosyn, Rab binding domain"/>
    <property type="match status" value="1"/>
</dbReference>
<dbReference type="HAMAP" id="MF_00657">
    <property type="entry name" value="Hydroxyl_YbiX"/>
    <property type="match status" value="1"/>
</dbReference>
<dbReference type="InterPro" id="IPR005123">
    <property type="entry name" value="Oxoglu/Fe-dep_dioxygenase_dom"/>
</dbReference>
<dbReference type="InterPro" id="IPR023550">
    <property type="entry name" value="PKHD_hydroxylase"/>
</dbReference>
<dbReference type="InterPro" id="IPR006620">
    <property type="entry name" value="Pro_4_hyd_alph"/>
</dbReference>
<dbReference type="InterPro" id="IPR044862">
    <property type="entry name" value="Pro_4_hyd_alph_FE2OG_OXY"/>
</dbReference>
<dbReference type="NCBIfam" id="NF003974">
    <property type="entry name" value="PRK05467.1-3"/>
    <property type="match status" value="1"/>
</dbReference>
<dbReference type="PANTHER" id="PTHR41536">
    <property type="entry name" value="PKHD-TYPE HYDROXYLASE YBIX"/>
    <property type="match status" value="1"/>
</dbReference>
<dbReference type="PANTHER" id="PTHR41536:SF1">
    <property type="entry name" value="PKHD-TYPE HYDROXYLASE YBIX"/>
    <property type="match status" value="1"/>
</dbReference>
<dbReference type="Pfam" id="PF13640">
    <property type="entry name" value="2OG-FeII_Oxy_3"/>
    <property type="match status" value="1"/>
</dbReference>
<dbReference type="SMART" id="SM00702">
    <property type="entry name" value="P4Hc"/>
    <property type="match status" value="1"/>
</dbReference>
<dbReference type="PROSITE" id="PS51471">
    <property type="entry name" value="FE2OG_OXY"/>
    <property type="match status" value="1"/>
</dbReference>
<feature type="chain" id="PRO_0000346506" description="PKHD-type hydroxylase P9515_13321">
    <location>
        <begin position="1"/>
        <end position="221"/>
    </location>
</feature>
<feature type="domain" description="Fe2OG dioxygenase" evidence="1">
    <location>
        <begin position="80"/>
        <end position="174"/>
    </location>
</feature>
<feature type="binding site" evidence="1">
    <location>
        <position position="98"/>
    </location>
    <ligand>
        <name>Fe cation</name>
        <dbReference type="ChEBI" id="CHEBI:24875"/>
    </ligand>
</feature>
<feature type="binding site" evidence="1">
    <location>
        <position position="100"/>
    </location>
    <ligand>
        <name>Fe cation</name>
        <dbReference type="ChEBI" id="CHEBI:24875"/>
    </ligand>
</feature>
<feature type="binding site" evidence="1">
    <location>
        <position position="155"/>
    </location>
    <ligand>
        <name>Fe cation</name>
        <dbReference type="ChEBI" id="CHEBI:24875"/>
    </ligand>
</feature>
<feature type="binding site" evidence="1">
    <location>
        <position position="165"/>
    </location>
    <ligand>
        <name>2-oxoglutarate</name>
        <dbReference type="ChEBI" id="CHEBI:16810"/>
    </ligand>
</feature>
<comment type="cofactor">
    <cofactor evidence="1">
        <name>Fe(2+)</name>
        <dbReference type="ChEBI" id="CHEBI:29033"/>
    </cofactor>
    <text evidence="1">Binds 1 Fe(2+) ion per subunit.</text>
</comment>
<comment type="cofactor">
    <cofactor evidence="1">
        <name>L-ascorbate</name>
        <dbReference type="ChEBI" id="CHEBI:38290"/>
    </cofactor>
</comment>
<comment type="sequence caution" evidence="2">
    <conflict type="erroneous initiation">
        <sequence resource="EMBL-CDS" id="ABM72539"/>
    </conflict>
</comment>
<proteinExistence type="inferred from homology"/>
<name>Y1332_PROM5</name>
<protein>
    <recommendedName>
        <fullName evidence="1">PKHD-type hydroxylase P9515_13321</fullName>
        <ecNumber evidence="1">1.14.11.-</ecNumber>
    </recommendedName>
</protein>
<reference key="1">
    <citation type="journal article" date="2007" name="PLoS Genet.">
        <title>Patterns and implications of gene gain and loss in the evolution of Prochlorococcus.</title>
        <authorList>
            <person name="Kettler G.C."/>
            <person name="Martiny A.C."/>
            <person name="Huang K."/>
            <person name="Zucker J."/>
            <person name="Coleman M.L."/>
            <person name="Rodrigue S."/>
            <person name="Chen F."/>
            <person name="Lapidus A."/>
            <person name="Ferriera S."/>
            <person name="Johnson J."/>
            <person name="Steglich C."/>
            <person name="Church G.M."/>
            <person name="Richardson P."/>
            <person name="Chisholm S.W."/>
        </authorList>
    </citation>
    <scope>NUCLEOTIDE SEQUENCE [LARGE SCALE GENOMIC DNA]</scope>
    <source>
        <strain>MIT 9515</strain>
    </source>
</reference>
<sequence>MNFLTYKLLNLEELKILKLNLNKQNELWESGKMTAGSQASKVKENLQLNRNSEISKKYSQLIRKKIITNPLIKSFALPKTIHGIMFTKSLQNMHYGRHIDNPFMSSGRSDLSFTISLTNKADYQGGELVIETLNSEKKLKLDAGEIIIYPSTYLHSVKKVKNGERLVCVGWIESYVKSIEEREYLFDLDAGAKGLLAKYGRSDELDNIFKSYSNLLRLLGN</sequence>
<keyword id="KW-0223">Dioxygenase</keyword>
<keyword id="KW-0408">Iron</keyword>
<keyword id="KW-0479">Metal-binding</keyword>
<keyword id="KW-0560">Oxidoreductase</keyword>
<keyword id="KW-0847">Vitamin C</keyword>
<organism>
    <name type="scientific">Prochlorococcus marinus (strain MIT 9515)</name>
    <dbReference type="NCBI Taxonomy" id="167542"/>
    <lineage>
        <taxon>Bacteria</taxon>
        <taxon>Bacillati</taxon>
        <taxon>Cyanobacteriota</taxon>
        <taxon>Cyanophyceae</taxon>
        <taxon>Synechococcales</taxon>
        <taxon>Prochlorococcaceae</taxon>
        <taxon>Prochlorococcus</taxon>
    </lineage>
</organism>
<evidence type="ECO:0000255" key="1">
    <source>
        <dbReference type="HAMAP-Rule" id="MF_00657"/>
    </source>
</evidence>
<evidence type="ECO:0000305" key="2"/>
<gene>
    <name type="ordered locus">P9515_13321</name>
</gene>
<accession>A2BXM8</accession>